<feature type="chain" id="PRO_0000096067" description="Single-stranded DNA-binding protein">
    <location>
        <begin position="1"/>
        <end position="168"/>
    </location>
</feature>
<feature type="domain" description="SSB" evidence="1">
    <location>
        <begin position="1"/>
        <end position="110"/>
    </location>
</feature>
<feature type="region of interest" description="Disordered" evidence="2">
    <location>
        <begin position="117"/>
        <end position="168"/>
    </location>
</feature>
<feature type="compositionally biased region" description="Gly residues" evidence="2">
    <location>
        <begin position="123"/>
        <end position="132"/>
    </location>
</feature>
<feature type="strand" evidence="4">
    <location>
        <begin position="6"/>
        <end position="16"/>
    </location>
</feature>
<feature type="strand" evidence="4">
    <location>
        <begin position="27"/>
        <end position="35"/>
    </location>
</feature>
<feature type="strand" evidence="4">
    <location>
        <begin position="53"/>
        <end position="60"/>
    </location>
</feature>
<feature type="helix" evidence="4">
    <location>
        <begin position="61"/>
        <end position="70"/>
    </location>
</feature>
<feature type="strand" evidence="4">
    <location>
        <begin position="76"/>
        <end position="88"/>
    </location>
</feature>
<feature type="strand" evidence="4">
    <location>
        <begin position="96"/>
        <end position="108"/>
    </location>
</feature>
<feature type="strand" evidence="4">
    <location>
        <begin position="111"/>
        <end position="118"/>
    </location>
</feature>
<evidence type="ECO:0000255" key="1">
    <source>
        <dbReference type="HAMAP-Rule" id="MF_00984"/>
    </source>
</evidence>
<evidence type="ECO:0000256" key="2">
    <source>
        <dbReference type="SAM" id="MobiDB-lite"/>
    </source>
</evidence>
<evidence type="ECO:0000305" key="3"/>
<evidence type="ECO:0007829" key="4">
    <source>
        <dbReference type="PDB" id="3AFP"/>
    </source>
</evidence>
<keyword id="KW-0002">3D-structure</keyword>
<keyword id="KW-0238">DNA-binding</keyword>
<keyword id="KW-1185">Reference proteome</keyword>
<proteinExistence type="evidence at protein level"/>
<dbReference type="EMBL" id="L39923">
    <property type="protein sequence ID" value="AAB53120.1"/>
    <property type="status" value="ALT_FRAME"/>
    <property type="molecule type" value="Genomic_DNA"/>
</dbReference>
<dbReference type="EMBL" id="AL022118">
    <property type="protein sequence ID" value="CAA17953.1"/>
    <property type="molecule type" value="Genomic_DNA"/>
</dbReference>
<dbReference type="EMBL" id="AL583926">
    <property type="protein sequence ID" value="CAC32216.1"/>
    <property type="molecule type" value="Genomic_DNA"/>
</dbReference>
<dbReference type="PIR" id="B87245">
    <property type="entry name" value="B87245"/>
</dbReference>
<dbReference type="RefSeq" id="NP_302712.1">
    <property type="nucleotide sequence ID" value="NC_002677.1"/>
</dbReference>
<dbReference type="RefSeq" id="WP_010909031.1">
    <property type="nucleotide sequence ID" value="NC_002677.1"/>
</dbReference>
<dbReference type="PDB" id="3AFP">
    <property type="method" value="X-ray"/>
    <property type="resolution" value="2.05 A"/>
    <property type="chains" value="A/B=1-168"/>
</dbReference>
<dbReference type="PDB" id="3AFQ">
    <property type="method" value="X-ray"/>
    <property type="resolution" value="2.80 A"/>
    <property type="chains" value="A/B/C/D=1-168"/>
</dbReference>
<dbReference type="PDBsum" id="3AFP"/>
<dbReference type="PDBsum" id="3AFQ"/>
<dbReference type="SMR" id="P46390"/>
<dbReference type="STRING" id="272631.gene:17576550"/>
<dbReference type="KEGG" id="mle:ML2684"/>
<dbReference type="PATRIC" id="fig|272631.5.peg.5176"/>
<dbReference type="Leproma" id="ML2684"/>
<dbReference type="eggNOG" id="COG0629">
    <property type="taxonomic scope" value="Bacteria"/>
</dbReference>
<dbReference type="HOGENOM" id="CLU_078758_1_0_11"/>
<dbReference type="OrthoDB" id="9809878at2"/>
<dbReference type="EvolutionaryTrace" id="P46390"/>
<dbReference type="Proteomes" id="UP000000806">
    <property type="component" value="Chromosome"/>
</dbReference>
<dbReference type="GO" id="GO:0009295">
    <property type="term" value="C:nucleoid"/>
    <property type="evidence" value="ECO:0007669"/>
    <property type="project" value="TreeGrafter"/>
</dbReference>
<dbReference type="GO" id="GO:0003697">
    <property type="term" value="F:single-stranded DNA binding"/>
    <property type="evidence" value="ECO:0007669"/>
    <property type="project" value="UniProtKB-UniRule"/>
</dbReference>
<dbReference type="GO" id="GO:0006260">
    <property type="term" value="P:DNA replication"/>
    <property type="evidence" value="ECO:0007669"/>
    <property type="project" value="InterPro"/>
</dbReference>
<dbReference type="CDD" id="cd04496">
    <property type="entry name" value="SSB_OBF"/>
    <property type="match status" value="1"/>
</dbReference>
<dbReference type="FunFam" id="2.40.50.140:FF:000057">
    <property type="entry name" value="Single-stranded DNA-binding protein"/>
    <property type="match status" value="1"/>
</dbReference>
<dbReference type="Gene3D" id="2.40.50.140">
    <property type="entry name" value="Nucleic acid-binding proteins"/>
    <property type="match status" value="1"/>
</dbReference>
<dbReference type="HAMAP" id="MF_00984">
    <property type="entry name" value="SSB"/>
    <property type="match status" value="1"/>
</dbReference>
<dbReference type="InterPro" id="IPR012340">
    <property type="entry name" value="NA-bd_OB-fold"/>
</dbReference>
<dbReference type="InterPro" id="IPR000424">
    <property type="entry name" value="Primosome_PriB/ssb"/>
</dbReference>
<dbReference type="InterPro" id="IPR011344">
    <property type="entry name" value="ssDNA-bd"/>
</dbReference>
<dbReference type="NCBIfam" id="NF005851">
    <property type="entry name" value="PRK07772.1"/>
    <property type="match status" value="1"/>
</dbReference>
<dbReference type="NCBIfam" id="TIGR00621">
    <property type="entry name" value="ssb"/>
    <property type="match status" value="1"/>
</dbReference>
<dbReference type="PANTHER" id="PTHR10302">
    <property type="entry name" value="SINGLE-STRANDED DNA-BINDING PROTEIN"/>
    <property type="match status" value="1"/>
</dbReference>
<dbReference type="PANTHER" id="PTHR10302:SF27">
    <property type="entry name" value="SINGLE-STRANDED DNA-BINDING PROTEIN"/>
    <property type="match status" value="1"/>
</dbReference>
<dbReference type="Pfam" id="PF00436">
    <property type="entry name" value="SSB"/>
    <property type="match status" value="1"/>
</dbReference>
<dbReference type="SUPFAM" id="SSF50249">
    <property type="entry name" value="Nucleic acid-binding proteins"/>
    <property type="match status" value="1"/>
</dbReference>
<dbReference type="PROSITE" id="PS50935">
    <property type="entry name" value="SSB"/>
    <property type="match status" value="1"/>
</dbReference>
<reference key="1">
    <citation type="journal article" date="1996" name="Microbiology">
        <title>Gene arrangement and organization in an approximately 76 kb fragment encompassing the oriC region of the chromosome of Mycobacterium leprae.</title>
        <authorList>
            <person name="Fsihi H."/>
            <person name="de Rossi E."/>
            <person name="Salazar L."/>
            <person name="Cantoni R."/>
            <person name="Labo M."/>
            <person name="Riccardi G."/>
            <person name="Takiff H.E."/>
            <person name="Eiglmeier K."/>
            <person name="Bergh S."/>
            <person name="Cole S.T."/>
        </authorList>
    </citation>
    <scope>NUCLEOTIDE SEQUENCE [GENOMIC DNA]</scope>
</reference>
<reference key="2">
    <citation type="journal article" date="2001" name="Nature">
        <title>Massive gene decay in the leprosy bacillus.</title>
        <authorList>
            <person name="Cole S.T."/>
            <person name="Eiglmeier K."/>
            <person name="Parkhill J."/>
            <person name="James K.D."/>
            <person name="Thomson N.R."/>
            <person name="Wheeler P.R."/>
            <person name="Honore N."/>
            <person name="Garnier T."/>
            <person name="Churcher C.M."/>
            <person name="Harris D.E."/>
            <person name="Mungall K.L."/>
            <person name="Basham D."/>
            <person name="Brown D."/>
            <person name="Chillingworth T."/>
            <person name="Connor R."/>
            <person name="Davies R.M."/>
            <person name="Devlin K."/>
            <person name="Duthoy S."/>
            <person name="Feltwell T."/>
            <person name="Fraser A."/>
            <person name="Hamlin N."/>
            <person name="Holroyd S."/>
            <person name="Hornsby T."/>
            <person name="Jagels K."/>
            <person name="Lacroix C."/>
            <person name="Maclean J."/>
            <person name="Moule S."/>
            <person name="Murphy L.D."/>
            <person name="Oliver K."/>
            <person name="Quail M.A."/>
            <person name="Rajandream M.A."/>
            <person name="Rutherford K.M."/>
            <person name="Rutter S."/>
            <person name="Seeger K."/>
            <person name="Simon S."/>
            <person name="Simmonds M."/>
            <person name="Skelton J."/>
            <person name="Squares R."/>
            <person name="Squares S."/>
            <person name="Stevens K."/>
            <person name="Taylor K."/>
            <person name="Whitehead S."/>
            <person name="Woodward J.R."/>
            <person name="Barrell B.G."/>
        </authorList>
    </citation>
    <scope>NUCLEOTIDE SEQUENCE [LARGE SCALE GENOMIC DNA]</scope>
    <source>
        <strain>TN</strain>
    </source>
</reference>
<name>SSB_MYCLE</name>
<gene>
    <name type="primary">ssb</name>
    <name type="ordered locus">ML2684</name>
    <name type="ORF">MLCB1913.20c</name>
</gene>
<sequence>MAGDTTITIVGNLTADPELRFTSSGAAVVNFTVASTPRIYDRQSGEWKDGEALFLRCNIWREAAENVAESLTRGARVIVTGRLKQRSFETREGEKRTVVEVEVDEIGPSLRYATAKVNKASRSGGGGGGFGSGSRQAPAQMSGGVGDDPWGSAPTSGSFGVGDEEPPF</sequence>
<accession>P46390</accession>
<accession>O53126</accession>
<protein>
    <recommendedName>
        <fullName evidence="1">Single-stranded DNA-binding protein</fullName>
        <shortName evidence="1">SSB</shortName>
    </recommendedName>
</protein>
<organism>
    <name type="scientific">Mycobacterium leprae (strain TN)</name>
    <dbReference type="NCBI Taxonomy" id="272631"/>
    <lineage>
        <taxon>Bacteria</taxon>
        <taxon>Bacillati</taxon>
        <taxon>Actinomycetota</taxon>
        <taxon>Actinomycetes</taxon>
        <taxon>Mycobacteriales</taxon>
        <taxon>Mycobacteriaceae</taxon>
        <taxon>Mycobacterium</taxon>
    </lineage>
</organism>
<comment type="subunit">
    <text evidence="1">Homotetramer.</text>
</comment>
<comment type="sequence caution" evidence="3">
    <conflict type="frameshift">
        <sequence resource="EMBL-CDS" id="AAB53120"/>
    </conflict>
</comment>